<comment type="catalytic activity">
    <reaction evidence="2">
        <text>GTP + H2O = 7,8-dihydroneopterin 3'-triphosphate + formate + H(+)</text>
        <dbReference type="Rhea" id="RHEA:17473"/>
        <dbReference type="ChEBI" id="CHEBI:15377"/>
        <dbReference type="ChEBI" id="CHEBI:15378"/>
        <dbReference type="ChEBI" id="CHEBI:15740"/>
        <dbReference type="ChEBI" id="CHEBI:37565"/>
        <dbReference type="ChEBI" id="CHEBI:58462"/>
        <dbReference type="EC" id="3.5.4.16"/>
    </reaction>
</comment>
<comment type="pathway">
    <text evidence="2">Cofactor biosynthesis; 7,8-dihydroneopterin triphosphate biosynthesis; 7,8-dihydroneopterin triphosphate from GTP: step 1/1.</text>
</comment>
<comment type="subunit">
    <text evidence="1">Toroid-shaped homodecamer, composed of two pentamers of five dimers.</text>
</comment>
<comment type="similarity">
    <text evidence="2">Belongs to the GTP cyclohydrolase I family.</text>
</comment>
<name>GCH1_CALS4</name>
<evidence type="ECO:0000250" key="1"/>
<evidence type="ECO:0000255" key="2">
    <source>
        <dbReference type="HAMAP-Rule" id="MF_00223"/>
    </source>
</evidence>
<keyword id="KW-0342">GTP-binding</keyword>
<keyword id="KW-0378">Hydrolase</keyword>
<keyword id="KW-0479">Metal-binding</keyword>
<keyword id="KW-0547">Nucleotide-binding</keyword>
<keyword id="KW-0554">One-carbon metabolism</keyword>
<keyword id="KW-1185">Reference proteome</keyword>
<keyword id="KW-0862">Zinc</keyword>
<dbReference type="EC" id="3.5.4.16" evidence="2"/>
<dbReference type="EMBL" id="AE008691">
    <property type="protein sequence ID" value="AAM25510.1"/>
    <property type="molecule type" value="Genomic_DNA"/>
</dbReference>
<dbReference type="RefSeq" id="WP_011026408.1">
    <property type="nucleotide sequence ID" value="NC_003869.1"/>
</dbReference>
<dbReference type="SMR" id="Q8R7N2"/>
<dbReference type="STRING" id="273068.TTE2371"/>
<dbReference type="KEGG" id="tte:TTE2371"/>
<dbReference type="eggNOG" id="COG0302">
    <property type="taxonomic scope" value="Bacteria"/>
</dbReference>
<dbReference type="HOGENOM" id="CLU_049768_3_3_9"/>
<dbReference type="OrthoDB" id="9801207at2"/>
<dbReference type="UniPathway" id="UPA00848">
    <property type="reaction ID" value="UER00151"/>
</dbReference>
<dbReference type="Proteomes" id="UP000000555">
    <property type="component" value="Chromosome"/>
</dbReference>
<dbReference type="GO" id="GO:0005737">
    <property type="term" value="C:cytoplasm"/>
    <property type="evidence" value="ECO:0007669"/>
    <property type="project" value="TreeGrafter"/>
</dbReference>
<dbReference type="GO" id="GO:0005525">
    <property type="term" value="F:GTP binding"/>
    <property type="evidence" value="ECO:0007669"/>
    <property type="project" value="UniProtKB-KW"/>
</dbReference>
<dbReference type="GO" id="GO:0003934">
    <property type="term" value="F:GTP cyclohydrolase I activity"/>
    <property type="evidence" value="ECO:0007669"/>
    <property type="project" value="UniProtKB-UniRule"/>
</dbReference>
<dbReference type="GO" id="GO:0008270">
    <property type="term" value="F:zinc ion binding"/>
    <property type="evidence" value="ECO:0007669"/>
    <property type="project" value="UniProtKB-UniRule"/>
</dbReference>
<dbReference type="GO" id="GO:0006730">
    <property type="term" value="P:one-carbon metabolic process"/>
    <property type="evidence" value="ECO:0007669"/>
    <property type="project" value="UniProtKB-UniRule"/>
</dbReference>
<dbReference type="GO" id="GO:0006729">
    <property type="term" value="P:tetrahydrobiopterin biosynthetic process"/>
    <property type="evidence" value="ECO:0007669"/>
    <property type="project" value="TreeGrafter"/>
</dbReference>
<dbReference type="GO" id="GO:0046654">
    <property type="term" value="P:tetrahydrofolate biosynthetic process"/>
    <property type="evidence" value="ECO:0007669"/>
    <property type="project" value="UniProtKB-UniRule"/>
</dbReference>
<dbReference type="FunFam" id="1.10.286.10:FF:000001">
    <property type="entry name" value="GTP cyclohydrolase 1"/>
    <property type="match status" value="1"/>
</dbReference>
<dbReference type="FunFam" id="3.30.1130.10:FF:000001">
    <property type="entry name" value="GTP cyclohydrolase 1"/>
    <property type="match status" value="1"/>
</dbReference>
<dbReference type="Gene3D" id="1.10.286.10">
    <property type="match status" value="1"/>
</dbReference>
<dbReference type="Gene3D" id="3.30.1130.10">
    <property type="match status" value="1"/>
</dbReference>
<dbReference type="HAMAP" id="MF_00223">
    <property type="entry name" value="FolE"/>
    <property type="match status" value="1"/>
</dbReference>
<dbReference type="InterPro" id="IPR043133">
    <property type="entry name" value="GTP-CH-I_C/QueF"/>
</dbReference>
<dbReference type="InterPro" id="IPR043134">
    <property type="entry name" value="GTP-CH-I_N"/>
</dbReference>
<dbReference type="InterPro" id="IPR001474">
    <property type="entry name" value="GTP_CycHdrlase_I"/>
</dbReference>
<dbReference type="InterPro" id="IPR018234">
    <property type="entry name" value="GTP_CycHdrlase_I_CS"/>
</dbReference>
<dbReference type="InterPro" id="IPR020602">
    <property type="entry name" value="GTP_CycHdrlase_I_dom"/>
</dbReference>
<dbReference type="NCBIfam" id="TIGR00063">
    <property type="entry name" value="folE"/>
    <property type="match status" value="1"/>
</dbReference>
<dbReference type="NCBIfam" id="NF006825">
    <property type="entry name" value="PRK09347.1-2"/>
    <property type="match status" value="1"/>
</dbReference>
<dbReference type="NCBIfam" id="NF006826">
    <property type="entry name" value="PRK09347.1-3"/>
    <property type="match status" value="1"/>
</dbReference>
<dbReference type="PANTHER" id="PTHR11109:SF7">
    <property type="entry name" value="GTP CYCLOHYDROLASE 1"/>
    <property type="match status" value="1"/>
</dbReference>
<dbReference type="PANTHER" id="PTHR11109">
    <property type="entry name" value="GTP CYCLOHYDROLASE I"/>
    <property type="match status" value="1"/>
</dbReference>
<dbReference type="Pfam" id="PF01227">
    <property type="entry name" value="GTP_cyclohydroI"/>
    <property type="match status" value="1"/>
</dbReference>
<dbReference type="SUPFAM" id="SSF55620">
    <property type="entry name" value="Tetrahydrobiopterin biosynthesis enzymes-like"/>
    <property type="match status" value="1"/>
</dbReference>
<dbReference type="PROSITE" id="PS00859">
    <property type="entry name" value="GTP_CYCLOHYDROL_1_1"/>
    <property type="match status" value="1"/>
</dbReference>
<dbReference type="PROSITE" id="PS00860">
    <property type="entry name" value="GTP_CYCLOHYDROL_1_2"/>
    <property type="match status" value="1"/>
</dbReference>
<gene>
    <name evidence="2" type="primary">folE</name>
    <name type="ordered locus">TTE2371</name>
</gene>
<protein>
    <recommendedName>
        <fullName evidence="2">GTP cyclohydrolase 1</fullName>
        <ecNumber evidence="2">3.5.4.16</ecNumber>
    </recommendedName>
    <alternativeName>
        <fullName evidence="2">GTP cyclohydrolase I</fullName>
        <shortName evidence="2">GTP-CH-I</shortName>
    </alternativeName>
</protein>
<feature type="chain" id="PRO_0000119459" description="GTP cyclohydrolase 1">
    <location>
        <begin position="1"/>
        <end position="188"/>
    </location>
</feature>
<feature type="binding site" evidence="2">
    <location>
        <position position="76"/>
    </location>
    <ligand>
        <name>Zn(2+)</name>
        <dbReference type="ChEBI" id="CHEBI:29105"/>
    </ligand>
</feature>
<feature type="binding site" evidence="2">
    <location>
        <position position="79"/>
    </location>
    <ligand>
        <name>Zn(2+)</name>
        <dbReference type="ChEBI" id="CHEBI:29105"/>
    </ligand>
</feature>
<feature type="binding site" evidence="2">
    <location>
        <position position="148"/>
    </location>
    <ligand>
        <name>Zn(2+)</name>
        <dbReference type="ChEBI" id="CHEBI:29105"/>
    </ligand>
</feature>
<sequence length="188" mass="21219">MIDKEKIKKAVREILEAIGEDPDREGLLETPDRVARMYEEIFSGLHTDVKDVIKIFQEDEHQEIILVKDIPLYSMCEHHLLPFIGVAHVAYLPRKGRILGLSKVARIVDVLSKRPQLQERLTSEIADTIMEAVNPLGVAVVIEAEHLCMTMRGVKKPGSKTVTSALRGIFRTDQKARAEVMALINSKR</sequence>
<accession>Q8R7N2</accession>
<reference key="1">
    <citation type="journal article" date="2002" name="Genome Res.">
        <title>A complete sequence of the T. tengcongensis genome.</title>
        <authorList>
            <person name="Bao Q."/>
            <person name="Tian Y."/>
            <person name="Li W."/>
            <person name="Xu Z."/>
            <person name="Xuan Z."/>
            <person name="Hu S."/>
            <person name="Dong W."/>
            <person name="Yang J."/>
            <person name="Chen Y."/>
            <person name="Xue Y."/>
            <person name="Xu Y."/>
            <person name="Lai X."/>
            <person name="Huang L."/>
            <person name="Dong X."/>
            <person name="Ma Y."/>
            <person name="Ling L."/>
            <person name="Tan H."/>
            <person name="Chen R."/>
            <person name="Wang J."/>
            <person name="Yu J."/>
            <person name="Yang H."/>
        </authorList>
    </citation>
    <scope>NUCLEOTIDE SEQUENCE [LARGE SCALE GENOMIC DNA]</scope>
    <source>
        <strain>DSM 15242 / JCM 11007 / NBRC 100824 / MB4</strain>
    </source>
</reference>
<organism>
    <name type="scientific">Caldanaerobacter subterraneus subsp. tengcongensis (strain DSM 15242 / JCM 11007 / NBRC 100824 / MB4)</name>
    <name type="common">Thermoanaerobacter tengcongensis</name>
    <dbReference type="NCBI Taxonomy" id="273068"/>
    <lineage>
        <taxon>Bacteria</taxon>
        <taxon>Bacillati</taxon>
        <taxon>Bacillota</taxon>
        <taxon>Clostridia</taxon>
        <taxon>Thermoanaerobacterales</taxon>
        <taxon>Thermoanaerobacteraceae</taxon>
        <taxon>Caldanaerobacter</taxon>
    </lineage>
</organism>
<proteinExistence type="inferred from homology"/>